<accession>Q0BNS1</accession>
<name>RS3_FRATO</name>
<comment type="function">
    <text evidence="1">Binds the lower part of the 30S subunit head. Binds mRNA in the 70S ribosome, positioning it for translation.</text>
</comment>
<comment type="subunit">
    <text evidence="1">Part of the 30S ribosomal subunit. Forms a tight complex with proteins S10 and S14.</text>
</comment>
<comment type="similarity">
    <text evidence="1">Belongs to the universal ribosomal protein uS3 family.</text>
</comment>
<proteinExistence type="inferred from homology"/>
<feature type="chain" id="PRO_0000293790" description="Small ribosomal subunit protein uS3">
    <location>
        <begin position="1"/>
        <end position="223"/>
    </location>
</feature>
<feature type="domain" description="KH type-2" evidence="1">
    <location>
        <begin position="39"/>
        <end position="107"/>
    </location>
</feature>
<reference key="1">
    <citation type="journal article" date="2006" name="J. Bacteriol.">
        <title>Chromosome rearrangement and diversification of Francisella tularensis revealed by the type B (OSU18) genome sequence.</title>
        <authorList>
            <person name="Petrosino J.F."/>
            <person name="Xiang Q."/>
            <person name="Karpathy S.E."/>
            <person name="Jiang H."/>
            <person name="Yerrapragada S."/>
            <person name="Liu Y."/>
            <person name="Gioia J."/>
            <person name="Hemphill L."/>
            <person name="Gonzalez A."/>
            <person name="Raghavan T.M."/>
            <person name="Uzman A."/>
            <person name="Fox G.E."/>
            <person name="Highlander S."/>
            <person name="Reichard M."/>
            <person name="Morton R.J."/>
            <person name="Clinkenbeard K.D."/>
            <person name="Weinstock G.M."/>
        </authorList>
    </citation>
    <scope>NUCLEOTIDE SEQUENCE [LARGE SCALE GENOMIC DNA]</scope>
    <source>
        <strain>OSU18</strain>
    </source>
</reference>
<dbReference type="EMBL" id="CP000437">
    <property type="protein sequence ID" value="ABI82263.1"/>
    <property type="molecule type" value="Genomic_DNA"/>
</dbReference>
<dbReference type="RefSeq" id="WP_003017796.1">
    <property type="nucleotide sequence ID" value="NC_017463.1"/>
</dbReference>
<dbReference type="SMR" id="Q0BNS1"/>
<dbReference type="KEGG" id="fth:FTH_0237"/>
<dbReference type="GO" id="GO:0022627">
    <property type="term" value="C:cytosolic small ribosomal subunit"/>
    <property type="evidence" value="ECO:0007669"/>
    <property type="project" value="TreeGrafter"/>
</dbReference>
<dbReference type="GO" id="GO:0003729">
    <property type="term" value="F:mRNA binding"/>
    <property type="evidence" value="ECO:0007669"/>
    <property type="project" value="UniProtKB-UniRule"/>
</dbReference>
<dbReference type="GO" id="GO:0019843">
    <property type="term" value="F:rRNA binding"/>
    <property type="evidence" value="ECO:0007669"/>
    <property type="project" value="UniProtKB-UniRule"/>
</dbReference>
<dbReference type="GO" id="GO:0003735">
    <property type="term" value="F:structural constituent of ribosome"/>
    <property type="evidence" value="ECO:0007669"/>
    <property type="project" value="InterPro"/>
</dbReference>
<dbReference type="GO" id="GO:0006412">
    <property type="term" value="P:translation"/>
    <property type="evidence" value="ECO:0007669"/>
    <property type="project" value="UniProtKB-UniRule"/>
</dbReference>
<dbReference type="CDD" id="cd02412">
    <property type="entry name" value="KH-II_30S_S3"/>
    <property type="match status" value="1"/>
</dbReference>
<dbReference type="FunFam" id="3.30.1140.32:FF:000001">
    <property type="entry name" value="30S ribosomal protein S3"/>
    <property type="match status" value="1"/>
</dbReference>
<dbReference type="FunFam" id="3.30.300.20:FF:000001">
    <property type="entry name" value="30S ribosomal protein S3"/>
    <property type="match status" value="1"/>
</dbReference>
<dbReference type="Gene3D" id="3.30.300.20">
    <property type="match status" value="1"/>
</dbReference>
<dbReference type="Gene3D" id="3.30.1140.32">
    <property type="entry name" value="Ribosomal protein S3, C-terminal domain"/>
    <property type="match status" value="1"/>
</dbReference>
<dbReference type="HAMAP" id="MF_01309_B">
    <property type="entry name" value="Ribosomal_uS3_B"/>
    <property type="match status" value="1"/>
</dbReference>
<dbReference type="InterPro" id="IPR004087">
    <property type="entry name" value="KH_dom"/>
</dbReference>
<dbReference type="InterPro" id="IPR015946">
    <property type="entry name" value="KH_dom-like_a/b"/>
</dbReference>
<dbReference type="InterPro" id="IPR004044">
    <property type="entry name" value="KH_dom_type_2"/>
</dbReference>
<dbReference type="InterPro" id="IPR009019">
    <property type="entry name" value="KH_sf_prok-type"/>
</dbReference>
<dbReference type="InterPro" id="IPR036419">
    <property type="entry name" value="Ribosomal_S3_C_sf"/>
</dbReference>
<dbReference type="InterPro" id="IPR005704">
    <property type="entry name" value="Ribosomal_uS3_bac-typ"/>
</dbReference>
<dbReference type="InterPro" id="IPR001351">
    <property type="entry name" value="Ribosomal_uS3_C"/>
</dbReference>
<dbReference type="InterPro" id="IPR018280">
    <property type="entry name" value="Ribosomal_uS3_CS"/>
</dbReference>
<dbReference type="NCBIfam" id="TIGR01009">
    <property type="entry name" value="rpsC_bact"/>
    <property type="match status" value="1"/>
</dbReference>
<dbReference type="PANTHER" id="PTHR11760">
    <property type="entry name" value="30S/40S RIBOSOMAL PROTEIN S3"/>
    <property type="match status" value="1"/>
</dbReference>
<dbReference type="PANTHER" id="PTHR11760:SF19">
    <property type="entry name" value="SMALL RIBOSOMAL SUBUNIT PROTEIN US3C"/>
    <property type="match status" value="1"/>
</dbReference>
<dbReference type="Pfam" id="PF07650">
    <property type="entry name" value="KH_2"/>
    <property type="match status" value="1"/>
</dbReference>
<dbReference type="Pfam" id="PF00189">
    <property type="entry name" value="Ribosomal_S3_C"/>
    <property type="match status" value="1"/>
</dbReference>
<dbReference type="SMART" id="SM00322">
    <property type="entry name" value="KH"/>
    <property type="match status" value="1"/>
</dbReference>
<dbReference type="SUPFAM" id="SSF54814">
    <property type="entry name" value="Prokaryotic type KH domain (KH-domain type II)"/>
    <property type="match status" value="1"/>
</dbReference>
<dbReference type="SUPFAM" id="SSF54821">
    <property type="entry name" value="Ribosomal protein S3 C-terminal domain"/>
    <property type="match status" value="1"/>
</dbReference>
<dbReference type="PROSITE" id="PS50823">
    <property type="entry name" value="KH_TYPE_2"/>
    <property type="match status" value="1"/>
</dbReference>
<dbReference type="PROSITE" id="PS00548">
    <property type="entry name" value="RIBOSOMAL_S3"/>
    <property type="match status" value="1"/>
</dbReference>
<keyword id="KW-0687">Ribonucleoprotein</keyword>
<keyword id="KW-0689">Ribosomal protein</keyword>
<keyword id="KW-0694">RNA-binding</keyword>
<keyword id="KW-0699">rRNA-binding</keyword>
<sequence>MGQKVNPNGIRLGYIRDWRSTWYADSSRYATKLNEDIKVREFLHKKLAAAAVSKIQIERPAQNAKITIHTARPGIVIGKKGEDVEKLRAEVHKLMGIPVQINIEEVRKPEIDAKLVAESVAQQLEKRVMFRRAMKKAMQAAMKSGAKGIKIMVSGRLGGAEIARSEWARDGRVPLQTFRADVDYATAEALTTYGVIGVKVWIYKGEILPGQIAEKKNNKKGAK</sequence>
<gene>
    <name evidence="1" type="primary">rpsC</name>
    <name type="ordered locus">FTH_0237</name>
</gene>
<protein>
    <recommendedName>
        <fullName evidence="1">Small ribosomal subunit protein uS3</fullName>
    </recommendedName>
    <alternativeName>
        <fullName evidence="2">30S ribosomal protein S3</fullName>
    </alternativeName>
</protein>
<evidence type="ECO:0000255" key="1">
    <source>
        <dbReference type="HAMAP-Rule" id="MF_01309"/>
    </source>
</evidence>
<evidence type="ECO:0000305" key="2"/>
<organism>
    <name type="scientific">Francisella tularensis subsp. holarctica (strain OSU18)</name>
    <dbReference type="NCBI Taxonomy" id="393011"/>
    <lineage>
        <taxon>Bacteria</taxon>
        <taxon>Pseudomonadati</taxon>
        <taxon>Pseudomonadota</taxon>
        <taxon>Gammaproteobacteria</taxon>
        <taxon>Thiotrichales</taxon>
        <taxon>Francisellaceae</taxon>
        <taxon>Francisella</taxon>
    </lineage>
</organism>